<sequence length="281" mass="32067">MADNMTTTQIEVGPGATNATINFEAGILECYERFSWQRALDYPGQDRLHRLKRKLESRIKTHNKSEPENKRMSLEERKAIGVKMMKVLLFMDPSAGIEGFEPYCVKNPSTSKCPNYDWTDYPPTPGKYLDDIEEEPENVDHPIEVVLRDMNNKDARQKIKDEVNTQKEGKFRLTIKRDIRNVLSLRVLVNGTFLKHPNGDKSLSTLHRLNAYDQNGGLVAKLVATDDRTVEDEKDGHRILNSLFERFDEGHSKPIRAAETAVGVLSQFGQEHRLSPEEGDN</sequence>
<protein>
    <recommendedName>
        <fullName evidence="1">Non-structural protein 1</fullName>
        <shortName evidence="1">NS1</shortName>
    </recommendedName>
    <alternativeName>
        <fullName evidence="1">NS1A</fullName>
    </alternativeName>
</protein>
<name>NS1_INBLE</name>
<feature type="chain" id="PRO_0000078960" description="Non-structural protein 1">
    <location>
        <begin position="1"/>
        <end position="281"/>
    </location>
</feature>
<feature type="region of interest" description="G1P2-binding">
    <location>
        <begin position="1"/>
        <end position="103"/>
    </location>
</feature>
<feature type="region of interest" description="RNA-binding and homodimerization" evidence="1">
    <location>
        <begin position="1"/>
        <end position="93"/>
    </location>
</feature>
<feature type="short sequence motif" description="Nuclear localization signal" evidence="1">
    <location>
        <begin position="50"/>
        <end position="55"/>
    </location>
</feature>
<feature type="mutagenesis site" description="Partial loss of dsRNA-binding and no effect on inhibition of IFN-beta promoter; when associated with A-38." evidence="3">
    <original>R</original>
    <variation>A</variation>
    <location>
        <position position="33"/>
    </location>
</feature>
<feature type="mutagenesis site" description="Partial loss of dsRNA-binding and no effect on inhibition of IFN-beta promoter; when associated with A-33." evidence="3">
    <original>R</original>
    <variation>A</variation>
    <location>
        <position position="38"/>
    </location>
</feature>
<feature type="mutagenesis site" description="Complete loss of dsRNA-binding and 40% loss of inhibition of IFN-beta promoter; when associated with A-50." evidence="3">
    <original>R</original>
    <variation>A</variation>
    <location>
        <position position="47"/>
    </location>
</feature>
<feature type="mutagenesis site" description="Complete loss of dsRNA-binding and 40% loss of inhibition of IFN-beta promoter; when associated with A-47." evidence="3">
    <original>R</original>
    <variation>A</variation>
    <location>
        <position position="50"/>
    </location>
</feature>
<feature type="mutagenesis site" description="Partial loss of dsRNA-binding and 15% loss of inhibition of IFN-beta promoter; when associated with A-53 and A-54." evidence="3">
    <original>K</original>
    <variation>A</variation>
    <location>
        <position position="52"/>
    </location>
</feature>
<feature type="mutagenesis site" description="Partial loss of dsRNA-binding and 15% loss of inhibition of IFN-beta promoter; when associated with A-52 and A-54." evidence="3">
    <original>R</original>
    <variation>A</variation>
    <location>
        <position position="53"/>
    </location>
</feature>
<feature type="mutagenesis site" description="Partial loss of dsRNA-binding and 15% loss of inhibition of IFN-beta promoter; when associated with A-52 and A-53." evidence="3">
    <original>K</original>
    <variation>A</variation>
    <location>
        <position position="54"/>
    </location>
</feature>
<feature type="mutagenesis site" description="Complete loss of dsRNA-binding and 20% loss of inhibition of IFN-beta promoter; when associated with A-60 and A-64." evidence="3">
    <original>R</original>
    <variation>A</variation>
    <location>
        <position position="58"/>
    </location>
</feature>
<feature type="mutagenesis site" description="Complete loss of dsRNA-binding and 20% loss of inhibition of IFN-beta promoter; when associated with A-58 and A-64." evidence="3">
    <original>K</original>
    <variation>A</variation>
    <location>
        <position position="60"/>
    </location>
</feature>
<feature type="mutagenesis site" description="Complete loss of dsRNA-binding and 20% loss of inhibition of IFN-beta promoter; when associated with A-58 and A-60." evidence="3">
    <original>K</original>
    <variation>A</variation>
    <location>
        <position position="64"/>
    </location>
</feature>
<feature type="mutagenesis site" description="No effect on dsRNA-binding and inhibition of IFN-beta promoter; when associated with A-71." evidence="3">
    <original>K</original>
    <variation>A</variation>
    <location>
        <position position="70"/>
    </location>
</feature>
<feature type="mutagenesis site" description="No effect on dsRNA-binding and inhibition of IFN-beta promoter; when associated with A-70." evidence="3">
    <original>R</original>
    <variation>A</variation>
    <location>
        <position position="71"/>
    </location>
</feature>
<feature type="mutagenesis site" description="Complete loss of dsRNA-binding and inhibition of IFN-beta promoter; when associated with A-78." evidence="3">
    <original>R</original>
    <variation>A</variation>
    <location>
        <position position="77"/>
    </location>
</feature>
<feature type="mutagenesis site" description="Complete loss of dsRNA-binding and inhibition of IFN-beta promoter; when associated with A-77." evidence="3">
    <original>K</original>
    <variation>A</variation>
    <location>
        <position position="78"/>
    </location>
</feature>
<feature type="mutagenesis site" description="No effect on dsRNA-binding and 45% loss of inhibition of IFN-beta promoter; when associated with A-86." evidence="3">
    <original>K</original>
    <variation>A</variation>
    <location>
        <position position="83"/>
    </location>
</feature>
<feature type="mutagenesis site" description="No effect on dsRNA-binding and 45% loss of inhibition of IFN-beta promoter; when associated with A-83." evidence="3">
    <original>K</original>
    <variation>A</variation>
    <location>
        <position position="86"/>
    </location>
</feature>
<feature type="helix" evidence="4">
    <location>
        <begin position="16"/>
        <end position="36"/>
    </location>
</feature>
<feature type="helix" evidence="4">
    <location>
        <begin position="42"/>
        <end position="63"/>
    </location>
</feature>
<feature type="helix" evidence="4">
    <location>
        <begin position="68"/>
        <end position="70"/>
    </location>
</feature>
<feature type="helix" evidence="4">
    <location>
        <begin position="74"/>
        <end position="90"/>
    </location>
</feature>
<feature type="helix" evidence="4">
    <location>
        <begin position="93"/>
        <end position="100"/>
    </location>
</feature>
<organismHost>
    <name type="scientific">Homo sapiens</name>
    <name type="common">Human</name>
    <dbReference type="NCBI Taxonomy" id="9606"/>
</organismHost>
<comment type="function">
    <text evidence="1 3">Binds and inhibits the conjugation of the ubiquitin-like G1P2/ISG15 protein to its target proteins. Since G1P2/ISG15 is an early antiviral protein, NS1 may inhibit the host antiviral response. Prevents EIF2AK2/PKR activation, either by binding double strand RNA or by interacting directly with EIF2AK2/PKR. Also binds poly(A) and U6 snRNA.</text>
</comment>
<comment type="subunit">
    <text evidence="1 2">Homodimer. Interacts with and inhibits human G1P2 conjugation by UBE1L.</text>
</comment>
<comment type="interaction">
    <interactant intactId="EBI-15938710">
        <id>P03502</id>
    </interactant>
    <interactant intactId="EBI-746466">
        <id>P05161</id>
        <label>ISG15</label>
    </interactant>
    <organismsDiffer>true</organismsDiffer>
    <experiments>4</experiments>
</comment>
<comment type="subcellular location">
    <subcellularLocation>
        <location evidence="1">Host cytoplasm</location>
    </subcellularLocation>
    <subcellularLocation>
        <location evidence="1">Host nucleus</location>
    </subcellularLocation>
</comment>
<comment type="alternative products">
    <event type="alternative splicing"/>
    <isoform>
        <id>P03502-1</id>
        <name>NS1</name>
        <sequence type="displayed"/>
    </isoform>
    <isoform>
        <id>P03511-1</id>
        <name>NEP</name>
        <name>NS2</name>
        <sequence type="external"/>
    </isoform>
</comment>
<comment type="domain">
    <text>Both N-terminus and C-terminus can inhibit IFN-beta promoter activation and IRF-3 nuclear translocation.</text>
</comment>
<comment type="similarity">
    <text evidence="1">Belongs to the influenza B viruses NS1 family.</text>
</comment>
<proteinExistence type="evidence at protein level"/>
<gene>
    <name evidence="1" type="primary">NS</name>
</gene>
<dbReference type="EMBL" id="J02096">
    <property type="protein sequence ID" value="AAA43756.1"/>
    <property type="molecule type" value="Genomic_RNA"/>
</dbReference>
<dbReference type="PIR" id="A04093">
    <property type="entry name" value="MNIVA"/>
</dbReference>
<dbReference type="RefSeq" id="NP_056666.1">
    <molecule id="P03502-1"/>
    <property type="nucleotide sequence ID" value="NC_002211.1"/>
</dbReference>
<dbReference type="PDB" id="1XEQ">
    <property type="method" value="X-ray"/>
    <property type="resolution" value="2.10 A"/>
    <property type="chains" value="A/B=1-103"/>
</dbReference>
<dbReference type="PDB" id="3R66">
    <property type="method" value="X-ray"/>
    <property type="resolution" value="2.30 A"/>
    <property type="chains" value="A/B=1-103"/>
</dbReference>
<dbReference type="PDB" id="3RT3">
    <property type="method" value="X-ray"/>
    <property type="resolution" value="2.01 A"/>
    <property type="chains" value="C=1-103"/>
</dbReference>
<dbReference type="PDB" id="3SDL">
    <property type="method" value="X-ray"/>
    <property type="resolution" value="2.29 A"/>
    <property type="chains" value="A/B=1-103"/>
</dbReference>
<dbReference type="PDB" id="6J62">
    <property type="method" value="X-ray"/>
    <property type="resolution" value="2.49 A"/>
    <property type="chains" value="C=1-103"/>
</dbReference>
<dbReference type="PDB" id="6JH0">
    <property type="method" value="X-ray"/>
    <property type="resolution" value="2.40 A"/>
    <property type="chains" value="A/C=1-103"/>
</dbReference>
<dbReference type="PDB" id="6JH1">
    <property type="method" value="X-ray"/>
    <property type="resolution" value="3.00 A"/>
    <property type="chains" value="A/B=1-103"/>
</dbReference>
<dbReference type="PDBsum" id="1XEQ"/>
<dbReference type="PDBsum" id="3R66"/>
<dbReference type="PDBsum" id="3RT3"/>
<dbReference type="PDBsum" id="3SDL"/>
<dbReference type="PDBsum" id="6J62"/>
<dbReference type="PDBsum" id="6JH0"/>
<dbReference type="PDBsum" id="6JH1"/>
<dbReference type="BMRB" id="P03502"/>
<dbReference type="SMR" id="P03502"/>
<dbReference type="DIP" id="DIP-59701N"/>
<dbReference type="IntAct" id="P03502">
    <property type="interactions" value="1"/>
</dbReference>
<dbReference type="DNASU" id="26824008"/>
<dbReference type="KEGG" id="vg:26824008"/>
<dbReference type="EvolutionaryTrace" id="P03502"/>
<dbReference type="Proteomes" id="UP000008158">
    <property type="component" value="Genome"/>
</dbReference>
<dbReference type="GO" id="GO:0030430">
    <property type="term" value="C:host cell cytoplasm"/>
    <property type="evidence" value="ECO:0007669"/>
    <property type="project" value="UniProtKB-SubCell"/>
</dbReference>
<dbReference type="GO" id="GO:0042025">
    <property type="term" value="C:host cell nucleus"/>
    <property type="evidence" value="ECO:0007669"/>
    <property type="project" value="UniProtKB-SubCell"/>
</dbReference>
<dbReference type="GO" id="GO:0030291">
    <property type="term" value="F:protein serine/threonine kinase inhibitor activity"/>
    <property type="evidence" value="ECO:0007669"/>
    <property type="project" value="UniProtKB-KW"/>
</dbReference>
<dbReference type="GO" id="GO:0003723">
    <property type="term" value="F:RNA binding"/>
    <property type="evidence" value="ECO:0007669"/>
    <property type="project" value="UniProtKB-KW"/>
</dbReference>
<dbReference type="GO" id="GO:0039579">
    <property type="term" value="P:symbiont-mediated suppression of host ISG15-protein conjugation"/>
    <property type="evidence" value="ECO:0007669"/>
    <property type="project" value="UniProtKB-KW"/>
</dbReference>
<dbReference type="GO" id="GO:0039580">
    <property type="term" value="P:symbiont-mediated suppression of host PKR/eIFalpha signaling"/>
    <property type="evidence" value="ECO:0007669"/>
    <property type="project" value="UniProtKB-KW"/>
</dbReference>
<dbReference type="GO" id="GO:0039502">
    <property type="term" value="P:symbiont-mediated suppression of host type I interferon-mediated signaling pathway"/>
    <property type="evidence" value="ECO:0007669"/>
    <property type="project" value="UniProtKB-KW"/>
</dbReference>
<dbReference type="Gene3D" id="1.10.287.10">
    <property type="entry name" value="S15/NS1, RNA-binding"/>
    <property type="match status" value="1"/>
</dbReference>
<dbReference type="HAMAP" id="MF_04066">
    <property type="entry name" value="INFV_NS1"/>
    <property type="match status" value="1"/>
</dbReference>
<dbReference type="InterPro" id="IPR004208">
    <property type="entry name" value="NS1"/>
</dbReference>
<dbReference type="InterPro" id="IPR009068">
    <property type="entry name" value="uS15_NS1_RNA-bd_sf"/>
</dbReference>
<dbReference type="Pfam" id="PF02942">
    <property type="entry name" value="Flu_B_NS1"/>
    <property type="match status" value="1"/>
</dbReference>
<dbReference type="PIRSF" id="PIRSF003938">
    <property type="entry name" value="Flu_B_NS1"/>
    <property type="match status" value="1"/>
</dbReference>
<dbReference type="SUPFAM" id="SSF47060">
    <property type="entry name" value="S15/NS1 RNA-binding domain"/>
    <property type="match status" value="1"/>
</dbReference>
<keyword id="KW-0002">3D-structure</keyword>
<keyword id="KW-0025">Alternative splicing</keyword>
<keyword id="KW-1035">Host cytoplasm</keyword>
<keyword id="KW-1048">Host nucleus</keyword>
<keyword id="KW-0945">Host-virus interaction</keyword>
<keyword id="KW-1090">Inhibition of host innate immune response by virus</keyword>
<keyword id="KW-1114">Inhibition of host interferon signaling pathway by virus</keyword>
<keyword id="KW-1095">Inhibition of host ISG15 by virus</keyword>
<keyword id="KW-1102">Inhibition of host PKR by virus</keyword>
<keyword id="KW-0922">Interferon antiviral system evasion</keyword>
<keyword id="KW-1185">Reference proteome</keyword>
<keyword id="KW-0694">RNA-binding</keyword>
<keyword id="KW-0899">Viral immunoevasion</keyword>
<evidence type="ECO:0000255" key="1">
    <source>
        <dbReference type="HAMAP-Rule" id="MF_04066"/>
    </source>
</evidence>
<evidence type="ECO:0000269" key="2">
    <source>
    </source>
</evidence>
<evidence type="ECO:0000269" key="3">
    <source>
    </source>
</evidence>
<evidence type="ECO:0007829" key="4">
    <source>
        <dbReference type="PDB" id="3RT3"/>
    </source>
</evidence>
<reference key="1">
    <citation type="journal article" date="1982" name="J. Virol.">
        <title>Influenza B virus genome: sequences and structural organization of RNA segment 8 and the mRNAs coding for the NS1 and NS2 proteins.</title>
        <authorList>
            <person name="Briedis D.J."/>
            <person name="Lamb R.A."/>
        </authorList>
    </citation>
    <scope>NUCLEOTIDE SEQUENCE [GENOMIC RNA]</scope>
</reference>
<reference key="2">
    <citation type="journal article" date="1996" name="Virology">
        <title>The RNA-binding and effector domains of the viral NS1 protein are conserved to different extents among influenza A and B viruses.</title>
        <authorList>
            <person name="Wang W."/>
            <person name="Krug R.M."/>
        </authorList>
    </citation>
    <scope>RNA-BINDING</scope>
</reference>
<reference key="3">
    <citation type="journal article" date="2001" name="EMBO J.">
        <title>Influenza B virus NS1 protein inhibits conjugation of the interferon (IFN)-induced ubiquitin-like ISG15 protein.</title>
        <authorList>
            <person name="Yuan W."/>
            <person name="Krug R.M."/>
        </authorList>
    </citation>
    <scope>INTERACTION WITH HUMAN G1P2</scope>
</reference>
<reference key="4">
    <citation type="journal article" date="2004" name="J. Virol.">
        <title>The N- and C-terminal domains of the NS1 protein of influenza B virus can independently inhibit IRF-3 and beta interferon promoter activation.</title>
        <authorList>
            <person name="Donelan N.R."/>
            <person name="Dauber B."/>
            <person name="Wang X."/>
            <person name="Basler C.F."/>
            <person name="Wolff T."/>
            <person name="Garcia-Sastre A."/>
        </authorList>
    </citation>
    <scope>FUNCTION</scope>
    <scope>MUTAGENESIS OF ARG-33; ARG-38; ARG-47; ARG-50; LYS-52; ARG-53; LYS-54; ARG-58; LYS-60; LYS-64; LYS-70; ARG-71; ARG-77; LYS-78; LYS-83 AND LYS-86</scope>
</reference>
<reference key="5">
    <citation type="journal article" date="2003" name="Virology">
        <title>Intracellular warfare between human influenza viruses and human cells: the roles of the viral NS1 protein.</title>
        <authorList>
            <person name="Krug R.M."/>
            <person name="Yuan W."/>
            <person name="Noah D.L."/>
            <person name="Latham A.G."/>
        </authorList>
    </citation>
    <scope>REVIEW</scope>
</reference>
<organism>
    <name type="scientific">Influenza B virus (strain B/Lee/1940)</name>
    <dbReference type="NCBI Taxonomy" id="518987"/>
    <lineage>
        <taxon>Viruses</taxon>
        <taxon>Riboviria</taxon>
        <taxon>Orthornavirae</taxon>
        <taxon>Negarnaviricota</taxon>
        <taxon>Polyploviricotina</taxon>
        <taxon>Insthoviricetes</taxon>
        <taxon>Articulavirales</taxon>
        <taxon>Orthomyxoviridae</taxon>
        <taxon>Betainfluenzavirus</taxon>
        <taxon>Betainfluenzavirus influenzae</taxon>
        <taxon>Influenza B virus</taxon>
    </lineage>
</organism>
<accession>P03502</accession>